<evidence type="ECO:0000255" key="1">
    <source>
        <dbReference type="HAMAP-Rule" id="MF_04068"/>
    </source>
</evidence>
<keyword id="KW-0025">Alternative splicing</keyword>
<keyword id="KW-1048">Host nucleus</keyword>
<keyword id="KW-0472">Membrane</keyword>
<keyword id="KW-0694">RNA-binding</keyword>
<keyword id="KW-0468">Viral matrix protein</keyword>
<keyword id="KW-0946">Virion</keyword>
<protein>
    <recommendedName>
        <fullName evidence="1">Matrix protein 1</fullName>
        <shortName evidence="1">M1</shortName>
    </recommendedName>
</protein>
<gene>
    <name evidence="1" type="primary">M</name>
</gene>
<reference key="1">
    <citation type="journal article" date="2006" name="Science">
        <title>Large-scale sequence analysis of avian influenza isolates.</title>
        <authorList>
            <person name="Obenauer J.C."/>
            <person name="Denson J."/>
            <person name="Mehta P.K."/>
            <person name="Su X."/>
            <person name="Mukatira S."/>
            <person name="Finkelstein D.B."/>
            <person name="Xu X."/>
            <person name="Wang J."/>
            <person name="Ma J."/>
            <person name="Fan Y."/>
            <person name="Rakestraw K.M."/>
            <person name="Webster R.G."/>
            <person name="Hoffmann E."/>
            <person name="Krauss S."/>
            <person name="Zheng J."/>
            <person name="Zhang Z."/>
            <person name="Naeve C.W."/>
        </authorList>
    </citation>
    <scope>NUCLEOTIDE SEQUENCE [GENOMIC RNA]</scope>
</reference>
<sequence>MSLLTEVETYVLSIIPSGPLKAEIAQRLEDVFAGKNTDLEALMEWLKTRPILSPLTKGILGFVFTLTVPSERGLQRRRFVQNALNGNGDPNNMDRAVKLYRKLKREITFHGAKEVALSYSTGALASCMGLIYNRMGTVTTEVAFGLVCATCEQIADSQHRSHRQMVTTTNPLIRHENRMVLASTTAKAMEQMAGSSEQAAEAMEVAGQARQMVQAMRTIGTHPSSSAGLKNDLLENLQAYQKRMGVQMQRFK</sequence>
<organism>
    <name type="scientific">Influenza A virus (strain A/Gull/Maryland/704/1977 H13N6)</name>
    <dbReference type="NCBI Taxonomy" id="384499"/>
    <lineage>
        <taxon>Viruses</taxon>
        <taxon>Riboviria</taxon>
        <taxon>Orthornavirae</taxon>
        <taxon>Negarnaviricota</taxon>
        <taxon>Polyploviricotina</taxon>
        <taxon>Insthoviricetes</taxon>
        <taxon>Articulavirales</taxon>
        <taxon>Orthomyxoviridae</taxon>
        <taxon>Alphainfluenzavirus</taxon>
        <taxon>Alphainfluenzavirus influenzae</taxon>
        <taxon>Influenza A virus</taxon>
    </lineage>
</organism>
<feature type="chain" id="PRO_0000326301" description="Matrix protein 1">
    <location>
        <begin position="1"/>
        <end position="252"/>
    </location>
</feature>
<feature type="region of interest" description="Membrane-binding" evidence="1">
    <location>
        <begin position="1"/>
        <end position="164"/>
    </location>
</feature>
<feature type="region of interest" description="RNP-binding" evidence="1">
    <location>
        <begin position="165"/>
        <end position="252"/>
    </location>
</feature>
<feature type="short sequence motif" description="Nuclear localization signal" evidence="1">
    <location>
        <begin position="101"/>
        <end position="105"/>
    </location>
</feature>
<organismHost>
    <name type="scientific">Aves</name>
    <dbReference type="NCBI Taxonomy" id="8782"/>
</organismHost>
<accession>Q0A414</accession>
<comment type="function">
    <text evidence="1">Plays critical roles in virus replication, from virus entry and uncoating to assembly and budding of the virus particle. M1 binding to ribonucleocapsids (RNPs) in nucleus seems to inhibit viral transcription. Interaction of viral NEP with M1-RNP is thought to promote nuclear export of the complex, which is targeted to the virion assembly site at the apical plasma membrane in polarized epithelial cells. Interactions with NA and HA may bring M1, a non-raft-associated protein, into lipid rafts. Forms a continuous shell on the inner side of the lipid bilayer in virion, where it binds the RNP. During virus entry into cell, the M2 ion channel acidifies the internal virion core, inducing M1 dissociation from the RNP. M1-free RNPs are transported to the nucleus, where viral transcription and replication can take place.</text>
</comment>
<comment type="function">
    <text evidence="1">Determines the virion's shape: spherical or filamentous. Clinical isolates of influenza are characterized by the presence of significant proportion of filamentous virions, whereas after multiple passage on eggs or cell culture, virions have only spherical morphology. Filamentous virions are thought to be important to infect neighboring cells, and spherical virions more suited to spread through aerosol between hosts organisms.</text>
</comment>
<comment type="subunit">
    <text evidence="1">Homodimer and homomultimer. Interacts with NEP. Binds ribonucleocapsid by both interacting with genomic RNA and NP protein. May interact with HA and NA. Cannot bind NP without genomic RNA.</text>
</comment>
<comment type="subcellular location">
    <subcellularLocation>
        <location evidence="1">Virion membrane</location>
        <topology evidence="1">Peripheral membrane protein</topology>
        <orientation evidence="1">Cytoplasmic side</orientation>
    </subcellularLocation>
    <subcellularLocation>
        <location evidence="1">Host nucleus</location>
    </subcellularLocation>
</comment>
<comment type="alternative products">
    <event type="alternative splicing"/>
    <isoform>
        <id>Q0A414-1</id>
        <name>M1</name>
        <sequence type="displayed"/>
    </isoform>
    <isoform>
        <id>Q0A415-1</id>
        <name>M2</name>
        <sequence type="external"/>
    </isoform>
    <text>Only the first 9 residues are shared by the 2 isoforms.</text>
</comment>
<comment type="miscellaneous">
    <text evidence="1">Most abundant protein in virion. When expressed alone can form virus-like particles in transfected cells.</text>
</comment>
<comment type="similarity">
    <text evidence="1">Belongs to the influenza viruses Matrix protein M1 family.</text>
</comment>
<name>M1_I77AF</name>
<dbReference type="EMBL" id="CY014695">
    <property type="protein sequence ID" value="ABI84567.1"/>
    <property type="molecule type" value="Genomic_RNA"/>
</dbReference>
<dbReference type="SMR" id="Q0A414"/>
<dbReference type="Proteomes" id="UP000000828">
    <property type="component" value="Genome"/>
</dbReference>
<dbReference type="GO" id="GO:0042025">
    <property type="term" value="C:host cell nucleus"/>
    <property type="evidence" value="ECO:0007669"/>
    <property type="project" value="UniProtKB-SubCell"/>
</dbReference>
<dbReference type="GO" id="GO:0016020">
    <property type="term" value="C:membrane"/>
    <property type="evidence" value="ECO:0007669"/>
    <property type="project" value="UniProtKB-KW"/>
</dbReference>
<dbReference type="GO" id="GO:0055036">
    <property type="term" value="C:virion membrane"/>
    <property type="evidence" value="ECO:0007669"/>
    <property type="project" value="UniProtKB-SubCell"/>
</dbReference>
<dbReference type="GO" id="GO:0003723">
    <property type="term" value="F:RNA binding"/>
    <property type="evidence" value="ECO:0007669"/>
    <property type="project" value="UniProtKB-UniRule"/>
</dbReference>
<dbReference type="GO" id="GO:0039660">
    <property type="term" value="F:structural constituent of virion"/>
    <property type="evidence" value="ECO:0007669"/>
    <property type="project" value="UniProtKB-UniRule"/>
</dbReference>
<dbReference type="GO" id="GO:0046761">
    <property type="term" value="P:viral budding from plasma membrane"/>
    <property type="evidence" value="ECO:0007669"/>
    <property type="project" value="UniProtKB-UniRule"/>
</dbReference>
<dbReference type="FunFam" id="1.10.10.180:FF:000001">
    <property type="entry name" value="Matrix protein 1"/>
    <property type="match status" value="1"/>
</dbReference>
<dbReference type="FunFam" id="1.20.91.10:FF:000001">
    <property type="entry name" value="Matrix protein 1"/>
    <property type="match status" value="1"/>
</dbReference>
<dbReference type="Gene3D" id="1.10.10.180">
    <property type="match status" value="1"/>
</dbReference>
<dbReference type="Gene3D" id="1.20.91.10">
    <property type="match status" value="1"/>
</dbReference>
<dbReference type="HAMAP" id="MF_04068">
    <property type="entry name" value="INFV_M1"/>
    <property type="match status" value="1"/>
</dbReference>
<dbReference type="InterPro" id="IPR036039">
    <property type="entry name" value="Flu_matrix_M1"/>
</dbReference>
<dbReference type="InterPro" id="IPR013188">
    <property type="entry name" value="Flu_matrix_M1_C"/>
</dbReference>
<dbReference type="InterPro" id="IPR001561">
    <property type="entry name" value="Flu_matrix_M1_N"/>
</dbReference>
<dbReference type="InterPro" id="IPR015423">
    <property type="entry name" value="Flu_matrix_M1_N_sub1"/>
</dbReference>
<dbReference type="InterPro" id="IPR015799">
    <property type="entry name" value="Flu_matrix_M1_N_sub2"/>
</dbReference>
<dbReference type="InterPro" id="IPR037533">
    <property type="entry name" value="INFV_M1"/>
</dbReference>
<dbReference type="Pfam" id="PF00598">
    <property type="entry name" value="Flu_M1"/>
    <property type="match status" value="1"/>
</dbReference>
<dbReference type="Pfam" id="PF08289">
    <property type="entry name" value="Flu_M1_C"/>
    <property type="match status" value="1"/>
</dbReference>
<dbReference type="SMART" id="SM00759">
    <property type="entry name" value="Flu_M1_C"/>
    <property type="match status" value="1"/>
</dbReference>
<dbReference type="SUPFAM" id="SSF48145">
    <property type="entry name" value="Influenza virus matrix protein M1"/>
    <property type="match status" value="1"/>
</dbReference>
<proteinExistence type="inferred from homology"/>